<evidence type="ECO:0000255" key="1">
    <source>
        <dbReference type="HAMAP-Rule" id="MF_00212"/>
    </source>
</evidence>
<reference key="1">
    <citation type="journal article" date="2006" name="J. Bacteriol.">
        <title>Pathogenomic sequence analysis of Bacillus cereus and Bacillus thuringiensis isolates closely related to Bacillus anthracis.</title>
        <authorList>
            <person name="Han C.S."/>
            <person name="Xie G."/>
            <person name="Challacombe J.F."/>
            <person name="Altherr M.R."/>
            <person name="Bhotika S.S."/>
            <person name="Bruce D."/>
            <person name="Campbell C.S."/>
            <person name="Campbell M.L."/>
            <person name="Chen J."/>
            <person name="Chertkov O."/>
            <person name="Cleland C."/>
            <person name="Dimitrijevic M."/>
            <person name="Doggett N.A."/>
            <person name="Fawcett J.J."/>
            <person name="Glavina T."/>
            <person name="Goodwin L.A."/>
            <person name="Hill K.K."/>
            <person name="Hitchcock P."/>
            <person name="Jackson P.J."/>
            <person name="Keim P."/>
            <person name="Kewalramani A.R."/>
            <person name="Longmire J."/>
            <person name="Lucas S."/>
            <person name="Malfatti S."/>
            <person name="McMurry K."/>
            <person name="Meincke L.J."/>
            <person name="Misra M."/>
            <person name="Moseman B.L."/>
            <person name="Mundt M."/>
            <person name="Munk A.C."/>
            <person name="Okinaka R.T."/>
            <person name="Parson-Quintana B."/>
            <person name="Reilly L.P."/>
            <person name="Richardson P."/>
            <person name="Robinson D.L."/>
            <person name="Rubin E."/>
            <person name="Saunders E."/>
            <person name="Tapia R."/>
            <person name="Tesmer J.G."/>
            <person name="Thayer N."/>
            <person name="Thompson L.S."/>
            <person name="Tice H."/>
            <person name="Ticknor L.O."/>
            <person name="Wills P.L."/>
            <person name="Brettin T.S."/>
            <person name="Gilna P."/>
        </authorList>
    </citation>
    <scope>NUCLEOTIDE SEQUENCE [LARGE SCALE GENOMIC DNA]</scope>
    <source>
        <strain>ZK / E33L</strain>
    </source>
</reference>
<keyword id="KW-0274">FAD</keyword>
<keyword id="KW-0285">Flavoprotein</keyword>
<keyword id="KW-0560">Oxidoreductase</keyword>
<keyword id="KW-0816">Tricarboxylic acid cycle</keyword>
<gene>
    <name evidence="1" type="primary">mqo</name>
    <name type="ordered locus">BCE33L2692</name>
</gene>
<name>MQO_BACCZ</name>
<sequence length="500" mass="55180">MSNMQQKTDVILIGAGIMSATLGSLLKELAPEWEIKVFEKLASAGEESSNEWNNAGTGHSALCELNYTSEKSDGSIDISKAVKVNEQFQLSRQFWAYLVKSKLIRNPQDFIMPLPHMSLVQGEKNVEFLKNRFEALSKNPLFQGMEFSDAPETLKKWLPLIMEGRTSNEPMAATKIDSGTDVNFGALTRMLFNYLKTKDVELNYKHSVENIKRTKNGLWEVKVHDMNSGKIEHHTAKFVFIGGGGGSLPLLQKTGIPESKHIGGFPVSGLFMVCKNQKVVEQHHAKVYGKAKVGAPPMSVPHLDTRYIDNKKALLFGPFAGFSPKFLKTGSNLDLIGSVKPNNVLTMLAAGVKEMGLTKYLIQQVMLSHEKRMEELREFIPNAKSEDWDIVVAGQRVQVIKDTDAGGKGTLQFGTEVVSAADGSIAALLGASPGASTAVHVMLEVLEKCFPSRMVEWEGKIKEMIPSYGISLTENPRLFQDLHTSTGRTLGLNEKETVHN</sequence>
<comment type="catalytic activity">
    <reaction evidence="1">
        <text>(S)-malate + a quinone = a quinol + oxaloacetate</text>
        <dbReference type="Rhea" id="RHEA:46012"/>
        <dbReference type="ChEBI" id="CHEBI:15589"/>
        <dbReference type="ChEBI" id="CHEBI:16452"/>
        <dbReference type="ChEBI" id="CHEBI:24646"/>
        <dbReference type="ChEBI" id="CHEBI:132124"/>
        <dbReference type="EC" id="1.1.5.4"/>
    </reaction>
</comment>
<comment type="cofactor">
    <cofactor evidence="1">
        <name>FAD</name>
        <dbReference type="ChEBI" id="CHEBI:57692"/>
    </cofactor>
</comment>
<comment type="pathway">
    <text evidence="1">Carbohydrate metabolism; tricarboxylic acid cycle; oxaloacetate from (S)-malate (quinone route): step 1/1.</text>
</comment>
<comment type="similarity">
    <text evidence="1">Belongs to the MQO family.</text>
</comment>
<proteinExistence type="inferred from homology"/>
<protein>
    <recommendedName>
        <fullName evidence="1">Probable malate:quinone oxidoreductase</fullName>
        <ecNumber evidence="1">1.1.5.4</ecNumber>
    </recommendedName>
    <alternativeName>
        <fullName evidence="1">MQO</fullName>
    </alternativeName>
    <alternativeName>
        <fullName evidence="1">Malate dehydrogenase [quinone]</fullName>
    </alternativeName>
</protein>
<accession>Q639Y8</accession>
<organism>
    <name type="scientific">Bacillus cereus (strain ZK / E33L)</name>
    <dbReference type="NCBI Taxonomy" id="288681"/>
    <lineage>
        <taxon>Bacteria</taxon>
        <taxon>Bacillati</taxon>
        <taxon>Bacillota</taxon>
        <taxon>Bacilli</taxon>
        <taxon>Bacillales</taxon>
        <taxon>Bacillaceae</taxon>
        <taxon>Bacillus</taxon>
        <taxon>Bacillus cereus group</taxon>
    </lineage>
</organism>
<dbReference type="EC" id="1.1.5.4" evidence="1"/>
<dbReference type="EMBL" id="CP000001">
    <property type="protein sequence ID" value="AAU17569.1"/>
    <property type="molecule type" value="Genomic_DNA"/>
</dbReference>
<dbReference type="RefSeq" id="WP_000069164.1">
    <property type="nucleotide sequence ID" value="NC_006274.1"/>
</dbReference>
<dbReference type="SMR" id="Q639Y8"/>
<dbReference type="KEGG" id="bcz:BCE33L2692"/>
<dbReference type="PATRIC" id="fig|288681.22.peg.2771"/>
<dbReference type="UniPathway" id="UPA00223">
    <property type="reaction ID" value="UER01008"/>
</dbReference>
<dbReference type="Proteomes" id="UP000002612">
    <property type="component" value="Chromosome"/>
</dbReference>
<dbReference type="GO" id="GO:0047545">
    <property type="term" value="F:2-hydroxyglutarate dehydrogenase activity"/>
    <property type="evidence" value="ECO:0007669"/>
    <property type="project" value="TreeGrafter"/>
</dbReference>
<dbReference type="GO" id="GO:0008924">
    <property type="term" value="F:L-malate dehydrogenase (quinone) activity"/>
    <property type="evidence" value="ECO:0007669"/>
    <property type="project" value="UniProtKB-UniRule"/>
</dbReference>
<dbReference type="GO" id="GO:0006099">
    <property type="term" value="P:tricarboxylic acid cycle"/>
    <property type="evidence" value="ECO:0007669"/>
    <property type="project" value="UniProtKB-UniRule"/>
</dbReference>
<dbReference type="HAMAP" id="MF_00212">
    <property type="entry name" value="MQO"/>
    <property type="match status" value="1"/>
</dbReference>
<dbReference type="InterPro" id="IPR036188">
    <property type="entry name" value="FAD/NAD-bd_sf"/>
</dbReference>
<dbReference type="InterPro" id="IPR006231">
    <property type="entry name" value="MQO"/>
</dbReference>
<dbReference type="NCBIfam" id="TIGR01320">
    <property type="entry name" value="mal_quin_oxido"/>
    <property type="match status" value="1"/>
</dbReference>
<dbReference type="NCBIfam" id="NF003603">
    <property type="entry name" value="PRK05257.1-1"/>
    <property type="match status" value="1"/>
</dbReference>
<dbReference type="NCBIfam" id="NF003604">
    <property type="entry name" value="PRK05257.1-3"/>
    <property type="match status" value="1"/>
</dbReference>
<dbReference type="NCBIfam" id="NF003605">
    <property type="entry name" value="PRK05257.1-4"/>
    <property type="match status" value="1"/>
</dbReference>
<dbReference type="NCBIfam" id="NF003606">
    <property type="entry name" value="PRK05257.2-1"/>
    <property type="match status" value="1"/>
</dbReference>
<dbReference type="NCBIfam" id="NF003608">
    <property type="entry name" value="PRK05257.2-4"/>
    <property type="match status" value="1"/>
</dbReference>
<dbReference type="NCBIfam" id="NF003610">
    <property type="entry name" value="PRK05257.3-1"/>
    <property type="match status" value="1"/>
</dbReference>
<dbReference type="NCBIfam" id="NF003611">
    <property type="entry name" value="PRK05257.3-2"/>
    <property type="match status" value="1"/>
</dbReference>
<dbReference type="NCBIfam" id="NF009875">
    <property type="entry name" value="PRK13339.1"/>
    <property type="match status" value="1"/>
</dbReference>
<dbReference type="PANTHER" id="PTHR43104">
    <property type="entry name" value="L-2-HYDROXYGLUTARATE DEHYDROGENASE, MITOCHONDRIAL"/>
    <property type="match status" value="1"/>
</dbReference>
<dbReference type="PANTHER" id="PTHR43104:SF2">
    <property type="entry name" value="L-2-HYDROXYGLUTARATE DEHYDROGENASE, MITOCHONDRIAL"/>
    <property type="match status" value="1"/>
</dbReference>
<dbReference type="Pfam" id="PF06039">
    <property type="entry name" value="Mqo"/>
    <property type="match status" value="1"/>
</dbReference>
<dbReference type="SUPFAM" id="SSF51905">
    <property type="entry name" value="FAD/NAD(P)-binding domain"/>
    <property type="match status" value="1"/>
</dbReference>
<feature type="chain" id="PRO_1000023792" description="Probable malate:quinone oxidoreductase">
    <location>
        <begin position="1"/>
        <end position="500"/>
    </location>
</feature>